<sequence>MDSSIHLSSLISRHDDEATRTSTSEGLEEGEVEGETLLIVESEDQASVDLSHDQSGDSLNSDEGDVSWMEEQLSYFCDKCQKWIPASQLREQLSYLKGDNFFRFTCSDCSADGKEQYERLKLTWQQVVMLAMYNLSLEGSGRQGYFRWKEDICAFIEKHWTFLLGNRKKTSTWWSTVAGCLSVGSPMYFRSGAQEFGEPGWWKLVHNKPPTMKPEGEKLSASTLKIKAASKPTLDPIITVEGLRKRASRNPVESAMELKEKRSRTQEAKDIRRAQKEAAGFLDRSTSSTPVKFISRGRRPDVILEKGEVIDFSSLSSSDRTPLTSPSPSPSLDFSAPGTPASHSATPSLLSEADLIPDVMPPQALFHDDDEMEGDGVIDPGMEYVPPPAGSVASGPVVGVRKKVRGPEQIKQEVESEEEKPDRMDIDSEDTDSNTSLQTRAREKRKPQLEKDTKPKEPRYTPVSIYEEKLLLKRLEACPGAVAMTPEARRLKRKLIVRQAKRDRGLPLFDLDQVVNAALLLVDGIYGAKEGGISRLPAGQATYRTTCQDFRILDRYQTSLPSRKGFRHQTTKFLYRLVGSEDMAVDQSIVSPYTSRILKPYIRRDYETKPPKLQLLSQIRSHLHRSDPHWTPEPDAPLDYCYVRPNHIPTINSMCQEFFWPGIDLSECLQYPDFSVVVLYKKVIIAFGFMVPDVKYNEAYISFLFVHPEWRRAGIATFMIYHLIQTCMGKDVTLHVSASNPAMLLYQKFGFKTEEYVLDFYDKYYPLESTECKHAFFLRLRR</sequence>
<proteinExistence type="evidence at protein level"/>
<reference key="1">
    <citation type="journal article" date="2004" name="Nat. Genet.">
        <title>Complete sequencing and characterization of 21,243 full-length human cDNAs.</title>
        <authorList>
            <person name="Ota T."/>
            <person name="Suzuki Y."/>
            <person name="Nishikawa T."/>
            <person name="Otsuki T."/>
            <person name="Sugiyama T."/>
            <person name="Irie R."/>
            <person name="Wakamatsu A."/>
            <person name="Hayashi K."/>
            <person name="Sato H."/>
            <person name="Nagai K."/>
            <person name="Kimura K."/>
            <person name="Makita H."/>
            <person name="Sekine M."/>
            <person name="Obayashi M."/>
            <person name="Nishi T."/>
            <person name="Shibahara T."/>
            <person name="Tanaka T."/>
            <person name="Ishii S."/>
            <person name="Yamamoto J."/>
            <person name="Saito K."/>
            <person name="Kawai Y."/>
            <person name="Isono Y."/>
            <person name="Nakamura Y."/>
            <person name="Nagahari K."/>
            <person name="Murakami K."/>
            <person name="Yasuda T."/>
            <person name="Iwayanagi T."/>
            <person name="Wagatsuma M."/>
            <person name="Shiratori A."/>
            <person name="Sudo H."/>
            <person name="Hosoiri T."/>
            <person name="Kaku Y."/>
            <person name="Kodaira H."/>
            <person name="Kondo H."/>
            <person name="Sugawara M."/>
            <person name="Takahashi M."/>
            <person name="Kanda K."/>
            <person name="Yokoi T."/>
            <person name="Furuya T."/>
            <person name="Kikkawa E."/>
            <person name="Omura Y."/>
            <person name="Abe K."/>
            <person name="Kamihara K."/>
            <person name="Katsuta N."/>
            <person name="Sato K."/>
            <person name="Tanikawa M."/>
            <person name="Yamazaki M."/>
            <person name="Ninomiya K."/>
            <person name="Ishibashi T."/>
            <person name="Yamashita H."/>
            <person name="Murakawa K."/>
            <person name="Fujimori K."/>
            <person name="Tanai H."/>
            <person name="Kimata M."/>
            <person name="Watanabe M."/>
            <person name="Hiraoka S."/>
            <person name="Chiba Y."/>
            <person name="Ishida S."/>
            <person name="Ono Y."/>
            <person name="Takiguchi S."/>
            <person name="Watanabe S."/>
            <person name="Yosida M."/>
            <person name="Hotuta T."/>
            <person name="Kusano J."/>
            <person name="Kanehori K."/>
            <person name="Takahashi-Fujii A."/>
            <person name="Hara H."/>
            <person name="Tanase T.-O."/>
            <person name="Nomura Y."/>
            <person name="Togiya S."/>
            <person name="Komai F."/>
            <person name="Hara R."/>
            <person name="Takeuchi K."/>
            <person name="Arita M."/>
            <person name="Imose N."/>
            <person name="Musashino K."/>
            <person name="Yuuki H."/>
            <person name="Oshima A."/>
            <person name="Sasaki N."/>
            <person name="Aotsuka S."/>
            <person name="Yoshikawa Y."/>
            <person name="Matsunawa H."/>
            <person name="Ichihara T."/>
            <person name="Shiohata N."/>
            <person name="Sano S."/>
            <person name="Moriya S."/>
            <person name="Momiyama H."/>
            <person name="Satoh N."/>
            <person name="Takami S."/>
            <person name="Terashima Y."/>
            <person name="Suzuki O."/>
            <person name="Nakagawa S."/>
            <person name="Senoh A."/>
            <person name="Mizoguchi H."/>
            <person name="Goto Y."/>
            <person name="Shimizu F."/>
            <person name="Wakebe H."/>
            <person name="Hishigaki H."/>
            <person name="Watanabe T."/>
            <person name="Sugiyama A."/>
            <person name="Takemoto M."/>
            <person name="Kawakami B."/>
            <person name="Yamazaki M."/>
            <person name="Watanabe K."/>
            <person name="Kumagai A."/>
            <person name="Itakura S."/>
            <person name="Fukuzumi Y."/>
            <person name="Fujimori Y."/>
            <person name="Komiyama M."/>
            <person name="Tashiro H."/>
            <person name="Tanigami A."/>
            <person name="Fujiwara T."/>
            <person name="Ono T."/>
            <person name="Yamada K."/>
            <person name="Fujii Y."/>
            <person name="Ozaki K."/>
            <person name="Hirao M."/>
            <person name="Ohmori Y."/>
            <person name="Kawabata A."/>
            <person name="Hikiji T."/>
            <person name="Kobatake N."/>
            <person name="Inagaki H."/>
            <person name="Ikema Y."/>
            <person name="Okamoto S."/>
            <person name="Okitani R."/>
            <person name="Kawakami T."/>
            <person name="Noguchi S."/>
            <person name="Itoh T."/>
            <person name="Shigeta K."/>
            <person name="Senba T."/>
            <person name="Matsumura K."/>
            <person name="Nakajima Y."/>
            <person name="Mizuno T."/>
            <person name="Morinaga M."/>
            <person name="Sasaki M."/>
            <person name="Togashi T."/>
            <person name="Oyama M."/>
            <person name="Hata H."/>
            <person name="Watanabe M."/>
            <person name="Komatsu T."/>
            <person name="Mizushima-Sugano J."/>
            <person name="Satoh T."/>
            <person name="Shirai Y."/>
            <person name="Takahashi Y."/>
            <person name="Nakagawa K."/>
            <person name="Okumura K."/>
            <person name="Nagase T."/>
            <person name="Nomura N."/>
            <person name="Kikuchi H."/>
            <person name="Masuho Y."/>
            <person name="Yamashita R."/>
            <person name="Nakai K."/>
            <person name="Yada T."/>
            <person name="Nakamura Y."/>
            <person name="Ohara O."/>
            <person name="Isogai T."/>
            <person name="Sugano S."/>
        </authorList>
    </citation>
    <scope>NUCLEOTIDE SEQUENCE [LARGE SCALE MRNA] (ISOFORM 2)</scope>
    <scope>VARIANT GLY-400</scope>
    <source>
        <tissue>Placenta</tissue>
    </source>
</reference>
<reference key="2">
    <citation type="journal article" date="2001" name="Nature">
        <title>The DNA sequence and comparative analysis of human chromosome 20.</title>
        <authorList>
            <person name="Deloukas P."/>
            <person name="Matthews L.H."/>
            <person name="Ashurst J.L."/>
            <person name="Burton J."/>
            <person name="Gilbert J.G.R."/>
            <person name="Jones M."/>
            <person name="Stavrides G."/>
            <person name="Almeida J.P."/>
            <person name="Babbage A.K."/>
            <person name="Bagguley C.L."/>
            <person name="Bailey J."/>
            <person name="Barlow K.F."/>
            <person name="Bates K.N."/>
            <person name="Beard L.M."/>
            <person name="Beare D.M."/>
            <person name="Beasley O.P."/>
            <person name="Bird C.P."/>
            <person name="Blakey S.E."/>
            <person name="Bridgeman A.M."/>
            <person name="Brown A.J."/>
            <person name="Buck D."/>
            <person name="Burrill W.D."/>
            <person name="Butler A.P."/>
            <person name="Carder C."/>
            <person name="Carter N.P."/>
            <person name="Chapman J.C."/>
            <person name="Clamp M."/>
            <person name="Clark G."/>
            <person name="Clark L.N."/>
            <person name="Clark S.Y."/>
            <person name="Clee C.M."/>
            <person name="Clegg S."/>
            <person name="Cobley V.E."/>
            <person name="Collier R.E."/>
            <person name="Connor R.E."/>
            <person name="Corby N.R."/>
            <person name="Coulson A."/>
            <person name="Coville G.J."/>
            <person name="Deadman R."/>
            <person name="Dhami P.D."/>
            <person name="Dunn M."/>
            <person name="Ellington A.G."/>
            <person name="Frankland J.A."/>
            <person name="Fraser A."/>
            <person name="French L."/>
            <person name="Garner P."/>
            <person name="Grafham D.V."/>
            <person name="Griffiths C."/>
            <person name="Griffiths M.N.D."/>
            <person name="Gwilliam R."/>
            <person name="Hall R.E."/>
            <person name="Hammond S."/>
            <person name="Harley J.L."/>
            <person name="Heath P.D."/>
            <person name="Ho S."/>
            <person name="Holden J.L."/>
            <person name="Howden P.J."/>
            <person name="Huckle E."/>
            <person name="Hunt A.R."/>
            <person name="Hunt S.E."/>
            <person name="Jekosch K."/>
            <person name="Johnson C.M."/>
            <person name="Johnson D."/>
            <person name="Kay M.P."/>
            <person name="Kimberley A.M."/>
            <person name="King A."/>
            <person name="Knights A."/>
            <person name="Laird G.K."/>
            <person name="Lawlor S."/>
            <person name="Lehvaeslaiho M.H."/>
            <person name="Leversha M.A."/>
            <person name="Lloyd C."/>
            <person name="Lloyd D.M."/>
            <person name="Lovell J.D."/>
            <person name="Marsh V.L."/>
            <person name="Martin S.L."/>
            <person name="McConnachie L.J."/>
            <person name="McLay K."/>
            <person name="McMurray A.A."/>
            <person name="Milne S.A."/>
            <person name="Mistry D."/>
            <person name="Moore M.J.F."/>
            <person name="Mullikin J.C."/>
            <person name="Nickerson T."/>
            <person name="Oliver K."/>
            <person name="Parker A."/>
            <person name="Patel R."/>
            <person name="Pearce T.A.V."/>
            <person name="Peck A.I."/>
            <person name="Phillimore B.J.C.T."/>
            <person name="Prathalingam S.R."/>
            <person name="Plumb R.W."/>
            <person name="Ramsay H."/>
            <person name="Rice C.M."/>
            <person name="Ross M.T."/>
            <person name="Scott C.E."/>
            <person name="Sehra H.K."/>
            <person name="Shownkeen R."/>
            <person name="Sims S."/>
            <person name="Skuce C.D."/>
            <person name="Smith M.L."/>
            <person name="Soderlund C."/>
            <person name="Steward C.A."/>
            <person name="Sulston J.E."/>
            <person name="Swann R.M."/>
            <person name="Sycamore N."/>
            <person name="Taylor R."/>
            <person name="Tee L."/>
            <person name="Thomas D.W."/>
            <person name="Thorpe A."/>
            <person name="Tracey A."/>
            <person name="Tromans A.C."/>
            <person name="Vaudin M."/>
            <person name="Wall M."/>
            <person name="Wallis J.M."/>
            <person name="Whitehead S.L."/>
            <person name="Whittaker P."/>
            <person name="Willey D.L."/>
            <person name="Williams L."/>
            <person name="Williams S.A."/>
            <person name="Wilming L."/>
            <person name="Wray P.W."/>
            <person name="Hubbard T."/>
            <person name="Durbin R.M."/>
            <person name="Bentley D.R."/>
            <person name="Beck S."/>
            <person name="Rogers J."/>
        </authorList>
    </citation>
    <scope>NUCLEOTIDE SEQUENCE [LARGE SCALE GENOMIC DNA]</scope>
</reference>
<reference key="3">
    <citation type="submission" date="2005-09" db="EMBL/GenBank/DDBJ databases">
        <authorList>
            <person name="Mural R.J."/>
            <person name="Istrail S."/>
            <person name="Sutton G.G."/>
            <person name="Florea L."/>
            <person name="Halpern A.L."/>
            <person name="Mobarry C.M."/>
            <person name="Lippert R."/>
            <person name="Walenz B."/>
            <person name="Shatkay H."/>
            <person name="Dew I."/>
            <person name="Miller J.R."/>
            <person name="Flanigan M.J."/>
            <person name="Edwards N.J."/>
            <person name="Bolanos R."/>
            <person name="Fasulo D."/>
            <person name="Halldorsson B.V."/>
            <person name="Hannenhalli S."/>
            <person name="Turner R."/>
            <person name="Yooseph S."/>
            <person name="Lu F."/>
            <person name="Nusskern D.R."/>
            <person name="Shue B.C."/>
            <person name="Zheng X.H."/>
            <person name="Zhong F."/>
            <person name="Delcher A.L."/>
            <person name="Huson D.H."/>
            <person name="Kravitz S.A."/>
            <person name="Mouchard L."/>
            <person name="Reinert K."/>
            <person name="Remington K.A."/>
            <person name="Clark A.G."/>
            <person name="Waterman M.S."/>
            <person name="Eichler E.E."/>
            <person name="Adams M.D."/>
            <person name="Hunkapiller M.W."/>
            <person name="Myers E.W."/>
            <person name="Venter J.C."/>
        </authorList>
    </citation>
    <scope>NUCLEOTIDE SEQUENCE [LARGE SCALE GENOMIC DNA]</scope>
</reference>
<reference key="4">
    <citation type="journal article" date="2004" name="Genome Res.">
        <title>The status, quality, and expansion of the NIH full-length cDNA project: the Mammalian Gene Collection (MGC).</title>
        <authorList>
            <consortium name="The MGC Project Team"/>
        </authorList>
    </citation>
    <scope>NUCLEOTIDE SEQUENCE [LARGE SCALE MRNA] (ISOFORMS 1 AND 2)</scope>
    <scope>VARIANT GLY-400</scope>
    <source>
        <tissue>Eye</tissue>
        <tissue>Placenta</tissue>
    </source>
</reference>
<reference key="5">
    <citation type="journal article" date="2000" name="Biochem. Biophys. Res. Commun.">
        <title>The cysteine- and glycine-rich LIM domain protein CRP2 specifically interacts with a novel human protein.</title>
        <authorList>
            <person name="Weiskirchen R."/>
            <person name="Gressner A.M."/>
        </authorList>
    </citation>
    <scope>NUCLEOTIDE SEQUENCE [MRNA] OF 546-782</scope>
    <scope>INTERACTION WITH CSRP2</scope>
    <source>
        <tissue>Kidney</tissue>
    </source>
</reference>
<reference key="6">
    <citation type="journal article" date="2008" name="Proc. Natl. Acad. Sci. U.S.A.">
        <title>A quantitative atlas of mitotic phosphorylation.</title>
        <authorList>
            <person name="Dephoure N."/>
            <person name="Zhou C."/>
            <person name="Villen J."/>
            <person name="Beausoleil S.A."/>
            <person name="Bakalarski C.E."/>
            <person name="Elledge S.J."/>
            <person name="Gygi S.P."/>
        </authorList>
    </citation>
    <scope>IDENTIFICATION BY MASS SPECTROMETRY [LARGE SCALE ANALYSIS]</scope>
    <source>
        <tissue>Cervix carcinoma</tissue>
    </source>
</reference>
<reference key="7">
    <citation type="journal article" date="2009" name="Mol. Cell. Biol.">
        <title>The double-histone-acetyltransferase complex ATAC is essential for mammalian development.</title>
        <authorList>
            <person name="Guelman S."/>
            <person name="Kozuka K."/>
            <person name="Mao Y."/>
            <person name="Pham V."/>
            <person name="Solloway M.J."/>
            <person name="Wang J."/>
            <person name="Wu J."/>
            <person name="Lill J.R."/>
            <person name="Zha J."/>
        </authorList>
    </citation>
    <scope>FUNCTION</scope>
    <scope>IDENTIFICATION IN ATAC COMPLEX</scope>
</reference>
<reference key="8">
    <citation type="journal article" date="2009" name="Science">
        <title>Lysine acetylation targets protein complexes and co-regulates major cellular functions.</title>
        <authorList>
            <person name="Choudhary C."/>
            <person name="Kumar C."/>
            <person name="Gnad F."/>
            <person name="Nielsen M.L."/>
            <person name="Rehman M."/>
            <person name="Walther T.C."/>
            <person name="Olsen J.V."/>
            <person name="Mann M."/>
        </authorList>
    </citation>
    <scope>ACETYLATION [LARGE SCALE ANALYSIS] AT LYS-292</scope>
    <scope>IDENTIFICATION BY MASS SPECTROMETRY [LARGE SCALE ANALYSIS]</scope>
</reference>
<reference key="9">
    <citation type="journal article" date="2013" name="J. Proteome Res.">
        <title>Toward a comprehensive characterization of a human cancer cell phosphoproteome.</title>
        <authorList>
            <person name="Zhou H."/>
            <person name="Di Palma S."/>
            <person name="Preisinger C."/>
            <person name="Peng M."/>
            <person name="Polat A.N."/>
            <person name="Heck A.J."/>
            <person name="Mohammed S."/>
        </authorList>
    </citation>
    <scope>PHOSPHORYLATION [LARGE SCALE ANALYSIS] AT SER-4; SER-285 AND SER-416</scope>
    <scope>IDENTIFICATION BY MASS SPECTROMETRY [LARGE SCALE ANALYSIS]</scope>
    <source>
        <tissue>Cervix carcinoma</tissue>
        <tissue>Erythroleukemia</tissue>
    </source>
</reference>
<protein>
    <recommendedName>
        <fullName>Cysteine-rich protein 2-binding protein</fullName>
        <shortName>CSRP2-binding protein</shortName>
    </recommendedName>
    <alternativeName>
        <fullName>ADA2A-containing complex subunit 2</fullName>
        <shortName>ATAC2</shortName>
    </alternativeName>
    <alternativeName>
        <fullName>CRP2-binding partner</fullName>
        <shortName>CRP2BP</shortName>
    </alternativeName>
    <alternativeName>
        <fullName evidence="11">Lysine acetyltransferase 14</fullName>
    </alternativeName>
</protein>
<comment type="function">
    <text evidence="7">Component of the ATAC complex, a complex with histone acetyltransferase activity on histones H3 and H4. May function as a scaffold for the ATAC complex to promote ATAC complex stability. Has also weak histone acetyltransferase activity toward histone H4. Required for the normal progression through G1 and G2/M phases of the cell cycle.</text>
</comment>
<comment type="subunit">
    <text evidence="4 7">Interacts with the LIM 1 domain of CSRP2. Component of the ADA2A-containing complex (ATAC), composed of CSRP2BP, KAT2A, TADA2L, TADA3L, ZZ3, MBIP, WDR5, YEATS2, CCDC101 and DR1. In the complex, it probably interacts directly with KAT2A, MBIP and WDR5.</text>
</comment>
<comment type="interaction">
    <interactant intactId="EBI-750907">
        <id>Q9H8E8</id>
    </interactant>
    <interactant intactId="EBI-739624">
        <id>Q8NHQ1</id>
        <label>CEP70</label>
    </interactant>
    <organismsDiffer>false</organismsDiffer>
    <experiments>3</experiments>
</comment>
<comment type="interaction">
    <interactant intactId="EBI-750907">
        <id>Q9H8E8</id>
    </interactant>
    <interactant intactId="EBI-710457">
        <id>Q7L190</id>
        <label>DPPA4</label>
    </interactant>
    <organismsDiffer>false</organismsDiffer>
    <experiments>3</experiments>
</comment>
<comment type="interaction">
    <interactant intactId="EBI-750907">
        <id>Q9H8E8</id>
    </interactant>
    <interactant intactId="EBI-741953">
        <id>Q9NS73</id>
        <label>MBIP</label>
    </interactant>
    <organismsDiffer>false</organismsDiffer>
    <experiments>9</experiments>
</comment>
<comment type="interaction">
    <interactant intactId="EBI-750907">
        <id>Q9H8E8</id>
    </interactant>
    <interactant intactId="EBI-10182361">
        <id>Q9NS73-5</id>
        <label>MBIP</label>
    </interactant>
    <organismsDiffer>false</organismsDiffer>
    <experiments>3</experiments>
</comment>
<comment type="interaction">
    <interactant intactId="EBI-750907">
        <id>Q9H8E8</id>
    </interactant>
    <interactant intactId="EBI-748601">
        <id>Q9UHV2</id>
        <label>SERTAD1</label>
    </interactant>
    <organismsDiffer>false</organismsDiffer>
    <experiments>3</experiments>
</comment>
<comment type="interaction">
    <interactant intactId="EBI-750907">
        <id>Q9H8E8</id>
    </interactant>
    <interactant intactId="EBI-719493">
        <id>P14373</id>
        <label>TRIM27</label>
    </interactant>
    <organismsDiffer>false</organismsDiffer>
    <experiments>6</experiments>
</comment>
<comment type="interaction">
    <interactant intactId="EBI-750907">
        <id>Q9H8E8</id>
    </interactant>
    <interactant intactId="EBI-2130429">
        <id>Q9BYV2</id>
        <label>TRIM54</label>
    </interactant>
    <organismsDiffer>false</organismsDiffer>
    <experiments>3</experiments>
</comment>
<comment type="interaction">
    <interactant intactId="EBI-750907">
        <id>Q9H8E8</id>
    </interactant>
    <interactant intactId="EBI-12239601">
        <id>P08048</id>
        <label>ZFY</label>
    </interactant>
    <organismsDiffer>false</organismsDiffer>
    <experiments>3</experiments>
</comment>
<comment type="subcellular location">
    <subcellularLocation>
        <location>Nucleus</location>
    </subcellularLocation>
    <subcellularLocation>
        <location>Cytoplasm</location>
    </subcellularLocation>
    <text>Mainly nuclear.</text>
</comment>
<comment type="alternative products">
    <event type="alternative splicing"/>
    <isoform>
        <id>Q9H8E8-1</id>
        <name>1</name>
        <sequence type="displayed"/>
    </isoform>
    <isoform>
        <id>Q9H8E8-2</id>
        <name>2</name>
        <sequence type="described" ref="VSP_000070"/>
    </isoform>
</comment>
<comment type="tissue specificity">
    <text>Expressed in skeletal muscle, heart, lung, placenta, brain, liver, pancreas and kidney. High expression in skeletal muscle and heart. Lower expression in lung.</text>
</comment>
<comment type="miscellaneous">
    <molecule>Isoform 2</molecule>
    <text evidence="10">May be due to an intron retention.</text>
</comment>
<gene>
    <name evidence="11" type="primary">KAT14</name>
    <name type="synonym">CSRP2BP</name>
</gene>
<dbReference type="EMBL" id="AK023759">
    <property type="protein sequence ID" value="BAB14669.1"/>
    <property type="molecule type" value="mRNA"/>
</dbReference>
<dbReference type="EMBL" id="AL050321">
    <property type="status" value="NOT_ANNOTATED_CDS"/>
    <property type="molecule type" value="Genomic_DNA"/>
</dbReference>
<dbReference type="EMBL" id="CH471133">
    <property type="protein sequence ID" value="EAX10255.1"/>
    <property type="molecule type" value="Genomic_DNA"/>
</dbReference>
<dbReference type="EMBL" id="BC007537">
    <property type="protein sequence ID" value="AAH07537.1"/>
    <property type="molecule type" value="mRNA"/>
</dbReference>
<dbReference type="EMBL" id="BC009174">
    <property type="status" value="NOT_ANNOTATED_CDS"/>
    <property type="molecule type" value="mRNA"/>
</dbReference>
<dbReference type="EMBL" id="AF252257">
    <property type="protein sequence ID" value="AAG10249.1"/>
    <property type="molecule type" value="mRNA"/>
</dbReference>
<dbReference type="CCDS" id="CCDS13133.1">
    <molecule id="Q9H8E8-1"/>
</dbReference>
<dbReference type="RefSeq" id="NP_001371121.2">
    <molecule id="Q9H8E8-1"/>
    <property type="nucleotide sequence ID" value="NM_001384192.3"/>
</dbReference>
<dbReference type="RefSeq" id="NP_001378998.1">
    <molecule id="Q9H8E8-1"/>
    <property type="nucleotide sequence ID" value="NM_001392069.1"/>
</dbReference>
<dbReference type="RefSeq" id="NP_001378999.1">
    <molecule id="Q9H8E8-1"/>
    <property type="nucleotide sequence ID" value="NM_001392070.1"/>
</dbReference>
<dbReference type="RefSeq" id="NP_001379000.1">
    <molecule id="Q9H8E8-1"/>
    <property type="nucleotide sequence ID" value="NM_001392071.1"/>
</dbReference>
<dbReference type="RefSeq" id="NP_001379001.1">
    <molecule id="Q9H8E8-1"/>
    <property type="nucleotide sequence ID" value="NM_001392072.1"/>
</dbReference>
<dbReference type="RefSeq" id="NP_065397.4">
    <molecule id="Q9H8E8-1"/>
    <property type="nucleotide sequence ID" value="NM_020536.7"/>
</dbReference>
<dbReference type="SMR" id="Q9H8E8"/>
<dbReference type="BioGRID" id="121485">
    <property type="interactions" value="115"/>
</dbReference>
<dbReference type="ComplexPortal" id="CPX-1004">
    <property type="entry name" value="PCAF-containing ATAC complex"/>
</dbReference>
<dbReference type="ComplexPortal" id="CPX-997">
    <property type="entry name" value="GCN5-containing ATAC complex"/>
</dbReference>
<dbReference type="CORUM" id="Q9H8E8"/>
<dbReference type="FunCoup" id="Q9H8E8">
    <property type="interactions" value="1896"/>
</dbReference>
<dbReference type="IntAct" id="Q9H8E8">
    <property type="interactions" value="66"/>
</dbReference>
<dbReference type="MINT" id="Q9H8E8"/>
<dbReference type="STRING" id="9606.ENSP00000392318"/>
<dbReference type="GlyGen" id="Q9H8E8">
    <property type="glycosylation" value="3 sites, 1 O-linked glycan (1 site)"/>
</dbReference>
<dbReference type="iPTMnet" id="Q9H8E8"/>
<dbReference type="PhosphoSitePlus" id="Q9H8E8"/>
<dbReference type="BioMuta" id="KAT14"/>
<dbReference type="DMDM" id="308153608"/>
<dbReference type="jPOST" id="Q9H8E8"/>
<dbReference type="MassIVE" id="Q9H8E8"/>
<dbReference type="PaxDb" id="9606-ENSP00000392318"/>
<dbReference type="PeptideAtlas" id="Q9H8E8"/>
<dbReference type="ProteomicsDB" id="81203">
    <molecule id="Q9H8E8-1"/>
</dbReference>
<dbReference type="ProteomicsDB" id="81204">
    <molecule id="Q9H8E8-2"/>
</dbReference>
<dbReference type="Pumba" id="Q9H8E8"/>
<dbReference type="Antibodypedia" id="24530">
    <property type="antibodies" value="155 antibodies from 23 providers"/>
</dbReference>
<dbReference type="DNASU" id="57325"/>
<dbReference type="Ensembl" id="ENST00000377681.8">
    <molecule id="Q9H8E8-1"/>
    <property type="protein sequence ID" value="ENSP00000366909.3"/>
    <property type="gene ID" value="ENSG00000149474.15"/>
</dbReference>
<dbReference type="Ensembl" id="ENST00000435364.8">
    <molecule id="Q9H8E8-1"/>
    <property type="protein sequence ID" value="ENSP00000392318.2"/>
    <property type="gene ID" value="ENSG00000149474.15"/>
</dbReference>
<dbReference type="Ensembl" id="ENST00000464792.2">
    <molecule id="Q9H8E8-1"/>
    <property type="protein sequence ID" value="ENSP00000424752.2"/>
    <property type="gene ID" value="ENSG00000149474.15"/>
</dbReference>
<dbReference type="Ensembl" id="ENST00000489634.2">
    <molecule id="Q9H8E8-2"/>
    <property type="protein sequence ID" value="ENSP00000425909.2"/>
    <property type="gene ID" value="ENSG00000149474.15"/>
</dbReference>
<dbReference type="Ensembl" id="ENST00000676935.1">
    <molecule id="Q9H8E8-1"/>
    <property type="protein sequence ID" value="ENSP00000503493.1"/>
    <property type="gene ID" value="ENSG00000149474.15"/>
</dbReference>
<dbReference type="Ensembl" id="ENST00000677174.1">
    <molecule id="Q9H8E8-1"/>
    <property type="protein sequence ID" value="ENSP00000503109.1"/>
    <property type="gene ID" value="ENSG00000149474.15"/>
</dbReference>
<dbReference type="Ensembl" id="ENST00000677266.1">
    <molecule id="Q9H8E8-1"/>
    <property type="protein sequence ID" value="ENSP00000504050.1"/>
    <property type="gene ID" value="ENSG00000149474.15"/>
</dbReference>
<dbReference type="Ensembl" id="ENST00000678772.1">
    <molecule id="Q9H8E8-1"/>
    <property type="protein sequence ID" value="ENSP00000504276.1"/>
    <property type="gene ID" value="ENSG00000149474.15"/>
</dbReference>
<dbReference type="GeneID" id="57325"/>
<dbReference type="KEGG" id="hsa:57325"/>
<dbReference type="UCSC" id="uc002wqk.3">
    <molecule id="Q9H8E8-1"/>
    <property type="organism name" value="human"/>
</dbReference>
<dbReference type="AGR" id="HGNC:15904"/>
<dbReference type="CTD" id="57325"/>
<dbReference type="DisGeNET" id="57325"/>
<dbReference type="GeneCards" id="KAT14"/>
<dbReference type="HGNC" id="HGNC:15904">
    <property type="gene designation" value="KAT14"/>
</dbReference>
<dbReference type="HPA" id="ENSG00000149474">
    <property type="expression patterns" value="Low tissue specificity"/>
</dbReference>
<dbReference type="MIM" id="617501">
    <property type="type" value="gene"/>
</dbReference>
<dbReference type="neXtProt" id="NX_Q9H8E8"/>
<dbReference type="OpenTargets" id="ENSG00000149474"/>
<dbReference type="PharmGKB" id="PA26969"/>
<dbReference type="VEuPathDB" id="HostDB:ENSG00000149474"/>
<dbReference type="eggNOG" id="KOG3138">
    <property type="taxonomic scope" value="Eukaryota"/>
</dbReference>
<dbReference type="GeneTree" id="ENSGT00390000001146"/>
<dbReference type="HOGENOM" id="CLU_022855_0_0_1"/>
<dbReference type="InParanoid" id="Q9H8E8"/>
<dbReference type="OMA" id="PRRNWPW"/>
<dbReference type="OrthoDB" id="4080456at2759"/>
<dbReference type="PAN-GO" id="Q9H8E8">
    <property type="GO annotations" value="0 GO annotations based on evolutionary models"/>
</dbReference>
<dbReference type="PhylomeDB" id="Q9H8E8"/>
<dbReference type="TreeFam" id="TF324809"/>
<dbReference type="BRENDA" id="2.3.1.48">
    <property type="organism ID" value="2681"/>
</dbReference>
<dbReference type="PathwayCommons" id="Q9H8E8"/>
<dbReference type="Reactome" id="R-HSA-3214847">
    <property type="pathway name" value="HATs acetylate histones"/>
</dbReference>
<dbReference type="Reactome" id="R-HSA-9772755">
    <property type="pathway name" value="Formation of WDR5-containing histone-modifying complexes"/>
</dbReference>
<dbReference type="SignaLink" id="Q9H8E8"/>
<dbReference type="BioGRID-ORCS" id="57325">
    <property type="hits" value="31 hits in 1147 CRISPR screens"/>
</dbReference>
<dbReference type="ChiTaRS" id="KAT14">
    <property type="organism name" value="human"/>
</dbReference>
<dbReference type="GeneWiki" id="CSRP2BP"/>
<dbReference type="GenomeRNAi" id="57325"/>
<dbReference type="Pharos" id="Q9H8E8">
    <property type="development level" value="Tbio"/>
</dbReference>
<dbReference type="PRO" id="PR:Q9H8E8"/>
<dbReference type="Proteomes" id="UP000005640">
    <property type="component" value="Chromosome 20"/>
</dbReference>
<dbReference type="RNAct" id="Q9H8E8">
    <property type="molecule type" value="protein"/>
</dbReference>
<dbReference type="Bgee" id="ENSG00000149474">
    <property type="expression patterns" value="Expressed in deltoid and 184 other cell types or tissues"/>
</dbReference>
<dbReference type="ExpressionAtlas" id="Q9H8E8">
    <property type="expression patterns" value="baseline and differential"/>
</dbReference>
<dbReference type="GO" id="GO:0140672">
    <property type="term" value="C:ATAC complex"/>
    <property type="evidence" value="ECO:0000314"/>
    <property type="project" value="BHF-UCL"/>
</dbReference>
<dbReference type="GO" id="GO:0005737">
    <property type="term" value="C:cytoplasm"/>
    <property type="evidence" value="ECO:0007669"/>
    <property type="project" value="UniProtKB-SubCell"/>
</dbReference>
<dbReference type="GO" id="GO:0072686">
    <property type="term" value="C:mitotic spindle"/>
    <property type="evidence" value="ECO:0000303"/>
    <property type="project" value="ComplexPortal"/>
</dbReference>
<dbReference type="GO" id="GO:0005654">
    <property type="term" value="C:nucleoplasm"/>
    <property type="evidence" value="ECO:0000304"/>
    <property type="project" value="Reactome"/>
</dbReference>
<dbReference type="GO" id="GO:0005634">
    <property type="term" value="C:nucleus"/>
    <property type="evidence" value="ECO:0000353"/>
    <property type="project" value="UniProtKB"/>
</dbReference>
<dbReference type="GO" id="GO:0004402">
    <property type="term" value="F:histone acetyltransferase activity"/>
    <property type="evidence" value="ECO:0000314"/>
    <property type="project" value="MGI"/>
</dbReference>
<dbReference type="GO" id="GO:0030274">
    <property type="term" value="F:LIM domain binding"/>
    <property type="evidence" value="ECO:0000303"/>
    <property type="project" value="UniProtKB"/>
</dbReference>
<dbReference type="GO" id="GO:0000122">
    <property type="term" value="P:negative regulation of transcription by RNA polymerase II"/>
    <property type="evidence" value="ECO:0000314"/>
    <property type="project" value="BHF-UCL"/>
</dbReference>
<dbReference type="GO" id="GO:0051726">
    <property type="term" value="P:regulation of cell cycle"/>
    <property type="evidence" value="ECO:0000315"/>
    <property type="project" value="ComplexPortal"/>
</dbReference>
<dbReference type="GO" id="GO:0051302">
    <property type="term" value="P:regulation of cell division"/>
    <property type="evidence" value="ECO:0000314"/>
    <property type="project" value="ComplexPortal"/>
</dbReference>
<dbReference type="GO" id="GO:0006355">
    <property type="term" value="P:regulation of DNA-templated transcription"/>
    <property type="evidence" value="ECO:0000315"/>
    <property type="project" value="ComplexPortal"/>
</dbReference>
<dbReference type="GO" id="GO:0045995">
    <property type="term" value="P:regulation of embryonic development"/>
    <property type="evidence" value="ECO:0000266"/>
    <property type="project" value="ComplexPortal"/>
</dbReference>
<dbReference type="GO" id="GO:0006357">
    <property type="term" value="P:regulation of transcription by RNA polymerase II"/>
    <property type="evidence" value="ECO:0000314"/>
    <property type="project" value="ComplexPortal"/>
</dbReference>
<dbReference type="CDD" id="cd04301">
    <property type="entry name" value="NAT_SF"/>
    <property type="match status" value="1"/>
</dbReference>
<dbReference type="FunFam" id="3.90.980.20:FF:000004">
    <property type="entry name" value="Cysteine-rich protein 2-binding protein-like"/>
    <property type="match status" value="1"/>
</dbReference>
<dbReference type="FunFam" id="3.40.630.30:FF:000013">
    <property type="entry name" value="cysteine-rich protein 2-binding protein-like"/>
    <property type="match status" value="1"/>
</dbReference>
<dbReference type="Gene3D" id="3.40.630.30">
    <property type="match status" value="1"/>
</dbReference>
<dbReference type="Gene3D" id="3.90.980.20">
    <property type="match status" value="1"/>
</dbReference>
<dbReference type="InterPro" id="IPR016181">
    <property type="entry name" value="Acyl_CoA_acyltransferase"/>
</dbReference>
<dbReference type="InterPro" id="IPR000182">
    <property type="entry name" value="GNAT_dom"/>
</dbReference>
<dbReference type="PANTHER" id="PTHR20916">
    <property type="entry name" value="CYSTEINE AND GLYCINE-RICH PROTEIN 2 BINDING PROTEIN"/>
    <property type="match status" value="1"/>
</dbReference>
<dbReference type="PANTHER" id="PTHR20916:SF26">
    <property type="entry name" value="CYSTEINE-RICH PROTEIN 2-BINDING PROTEIN"/>
    <property type="match status" value="1"/>
</dbReference>
<dbReference type="Pfam" id="PF00583">
    <property type="entry name" value="Acetyltransf_1"/>
    <property type="match status" value="1"/>
</dbReference>
<dbReference type="SUPFAM" id="SSF55729">
    <property type="entry name" value="Acyl-CoA N-acyltransferases (Nat)"/>
    <property type="match status" value="1"/>
</dbReference>
<dbReference type="PROSITE" id="PS51186">
    <property type="entry name" value="GNAT"/>
    <property type="match status" value="1"/>
</dbReference>
<name>CSR2B_HUMAN</name>
<organism>
    <name type="scientific">Homo sapiens</name>
    <name type="common">Human</name>
    <dbReference type="NCBI Taxonomy" id="9606"/>
    <lineage>
        <taxon>Eukaryota</taxon>
        <taxon>Metazoa</taxon>
        <taxon>Chordata</taxon>
        <taxon>Craniata</taxon>
        <taxon>Vertebrata</taxon>
        <taxon>Euteleostomi</taxon>
        <taxon>Mammalia</taxon>
        <taxon>Eutheria</taxon>
        <taxon>Euarchontoglires</taxon>
        <taxon>Primates</taxon>
        <taxon>Haplorrhini</taxon>
        <taxon>Catarrhini</taxon>
        <taxon>Hominidae</taxon>
        <taxon>Homo</taxon>
    </lineage>
</organism>
<accession>Q9H8E8</accession>
<accession>A2A2I5</accession>
<accession>Q96GW6</accession>
<accession>Q96IH3</accession>
<accession>Q9HBF0</accession>
<accession>Q9UIY5</accession>
<feature type="chain" id="PRO_0000074603" description="Cysteine-rich protein 2-binding protein">
    <location>
        <begin position="1"/>
        <end position="782"/>
    </location>
</feature>
<feature type="domain" description="N-acetyltransferase" evidence="2">
    <location>
        <begin position="638"/>
        <end position="782"/>
    </location>
</feature>
<feature type="region of interest" description="Disordered" evidence="3">
    <location>
        <begin position="13"/>
        <end position="33"/>
    </location>
</feature>
<feature type="region of interest" description="Disordered" evidence="3">
    <location>
        <begin position="251"/>
        <end position="282"/>
    </location>
</feature>
<feature type="region of interest" description="Disordered" evidence="3">
    <location>
        <begin position="315"/>
        <end position="346"/>
    </location>
</feature>
<feature type="region of interest" description="Disordered" evidence="3">
    <location>
        <begin position="400"/>
        <end position="460"/>
    </location>
</feature>
<feature type="compositionally biased region" description="Basic and acidic residues" evidence="3">
    <location>
        <begin position="256"/>
        <end position="276"/>
    </location>
</feature>
<feature type="compositionally biased region" description="Low complexity" evidence="3">
    <location>
        <begin position="315"/>
        <end position="335"/>
    </location>
</feature>
<feature type="compositionally biased region" description="Basic and acidic residues" evidence="3">
    <location>
        <begin position="405"/>
        <end position="426"/>
    </location>
</feature>
<feature type="compositionally biased region" description="Basic and acidic residues" evidence="3">
    <location>
        <begin position="446"/>
        <end position="459"/>
    </location>
</feature>
<feature type="modified residue" description="Phosphoserine" evidence="13">
    <location>
        <position position="4"/>
    </location>
</feature>
<feature type="modified residue" description="N6-acetyllysine" evidence="1">
    <location>
        <position position="231"/>
    </location>
</feature>
<feature type="modified residue" description="Phosphoserine" evidence="13">
    <location>
        <position position="285"/>
    </location>
</feature>
<feature type="modified residue" description="N6-acetyllysine" evidence="12">
    <location>
        <position position="292"/>
    </location>
</feature>
<feature type="modified residue" description="Phosphoserine" evidence="13">
    <location>
        <position position="416"/>
    </location>
</feature>
<feature type="splice variant" id="VSP_000070" description="In isoform 2." evidence="8 9">
    <location>
        <begin position="1"/>
        <end position="128"/>
    </location>
</feature>
<feature type="sequence variant" id="VAR_028034" description="In dbSNP:rs6081011.">
    <original>P</original>
    <variation>L</variation>
    <location>
        <position position="214"/>
    </location>
</feature>
<feature type="sequence variant" id="VAR_028035" description="In dbSNP:rs1205193." evidence="5 6">
    <original>V</original>
    <variation>G</variation>
    <location>
        <position position="400"/>
    </location>
</feature>
<feature type="sequence variant" id="VAR_020466" description="In dbSNP:rs2295182.">
    <original>R</original>
    <variation>T</variation>
    <location>
        <position position="442"/>
    </location>
</feature>
<feature type="sequence variant" id="VAR_033839" description="In dbSNP:rs11557577.">
    <original>P</original>
    <variation>R</variation>
    <location>
        <position position="600"/>
    </location>
</feature>
<feature type="sequence variant" id="VAR_048166" description="In dbSNP:rs6081027.">
    <original>A</original>
    <variation>S</variation>
    <location>
        <position position="738"/>
    </location>
</feature>
<feature type="sequence conflict" description="In Ref. 1; BAB14669." evidence="10" ref="1">
    <original>R</original>
    <variation>G</variation>
    <location>
        <position position="535"/>
    </location>
</feature>
<evidence type="ECO:0000250" key="1">
    <source>
        <dbReference type="UniProtKB" id="Q8CID0"/>
    </source>
</evidence>
<evidence type="ECO:0000255" key="2">
    <source>
        <dbReference type="PROSITE-ProRule" id="PRU00532"/>
    </source>
</evidence>
<evidence type="ECO:0000256" key="3">
    <source>
        <dbReference type="SAM" id="MobiDB-lite"/>
    </source>
</evidence>
<evidence type="ECO:0000269" key="4">
    <source>
    </source>
</evidence>
<evidence type="ECO:0000269" key="5">
    <source>
    </source>
</evidence>
<evidence type="ECO:0000269" key="6">
    <source>
    </source>
</evidence>
<evidence type="ECO:0000269" key="7">
    <source>
    </source>
</evidence>
<evidence type="ECO:0000303" key="8">
    <source>
    </source>
</evidence>
<evidence type="ECO:0000303" key="9">
    <source>
    </source>
</evidence>
<evidence type="ECO:0000305" key="10"/>
<evidence type="ECO:0000312" key="11">
    <source>
        <dbReference type="HGNC" id="HGNC:15904"/>
    </source>
</evidence>
<evidence type="ECO:0007744" key="12">
    <source>
    </source>
</evidence>
<evidence type="ECO:0007744" key="13">
    <source>
    </source>
</evidence>
<keyword id="KW-0007">Acetylation</keyword>
<keyword id="KW-0025">Alternative splicing</keyword>
<keyword id="KW-0963">Cytoplasm</keyword>
<keyword id="KW-0539">Nucleus</keyword>
<keyword id="KW-0597">Phosphoprotein</keyword>
<keyword id="KW-1267">Proteomics identification</keyword>
<keyword id="KW-1185">Reference proteome</keyword>